<accession>Q9L3P8</accession>
<accession>Q3MG76</accession>
<keyword id="KW-0249">Electron transport</keyword>
<keyword id="KW-0349">Heme</keyword>
<keyword id="KW-0408">Iron</keyword>
<keyword id="KW-0472">Membrane</keyword>
<keyword id="KW-0479">Metal-binding</keyword>
<keyword id="KW-0602">Photosynthesis</keyword>
<keyword id="KW-0732">Signal</keyword>
<keyword id="KW-0793">Thylakoid</keyword>
<keyword id="KW-0812">Transmembrane</keyword>
<keyword id="KW-1133">Transmembrane helix</keyword>
<keyword id="KW-0813">Transport</keyword>
<proteinExistence type="inferred from homology"/>
<gene>
    <name evidence="1" type="primary">petA</name>
    <name type="ordered locus">Ava_0384</name>
</gene>
<sequence>MRNACTRARLTRTARAMVKTLFIAIASVTFFFTSDLALPQSAAAYPFWAQQTYPETPREPTGRIVCANCHLAAKPTEVEVPQSVLPDTVFKAVVKIPYDTSVQQVGADGSKVGLNVGAVLMLPEGFKIAPEDRIPEELKEEIGDVYFQPYGEDKDNIVIVGPLPGEQYQEIVFPVLSPNPANDKNIHFGKYSVHVGGNRGRGQVYPTGEKSNNNLYSAAATGTISKIAKQEGEDGSVKYLVDIKTESGEVVSDTIPAGPELIVSEGQAVKAGDALTNNPNVGGFGQLDAEIVLQDANRVGWLIAFVALVMLAQVMLVLKKKQVEKVQAAEMNF</sequence>
<evidence type="ECO:0000255" key="1">
    <source>
        <dbReference type="HAMAP-Rule" id="MF_00610"/>
    </source>
</evidence>
<evidence type="ECO:0000305" key="2"/>
<comment type="function">
    <text evidence="1">Component of the cytochrome b6-f complex, which mediates electron transfer between photosystem II (PSII) and photosystem I (PSI), cyclic electron flow around PSI, and state transitions.</text>
</comment>
<comment type="cofactor">
    <cofactor evidence="1">
        <name>heme</name>
        <dbReference type="ChEBI" id="CHEBI:30413"/>
    </cofactor>
    <text evidence="1">Binds 1 heme group covalently.</text>
</comment>
<comment type="subunit">
    <text evidence="1">The 4 large subunits of the cytochrome b6-f complex are cytochrome b6, subunit IV (17 kDa polypeptide, PetD), cytochrome f and the Rieske protein, while the 4 small subunits are PetG, PetL, PetM and PetN. The complex functions as a dimer.</text>
</comment>
<comment type="subcellular location">
    <subcellularLocation>
        <location evidence="1">Cellular thylakoid membrane</location>
        <topology evidence="1">Single-pass membrane protein</topology>
    </subcellularLocation>
</comment>
<comment type="similarity">
    <text evidence="1">Belongs to the cytochrome f family.</text>
</comment>
<comment type="sequence caution" evidence="2">
    <conflict type="erroneous initiation">
        <sequence resource="EMBL-CDS" id="ABA20010"/>
    </conflict>
</comment>
<dbReference type="EMBL" id="AJ271819">
    <property type="protein sequence ID" value="CAB72245.1"/>
    <property type="molecule type" value="Genomic_DNA"/>
</dbReference>
<dbReference type="EMBL" id="CP000117">
    <property type="protein sequence ID" value="ABA20010.1"/>
    <property type="status" value="ALT_INIT"/>
    <property type="molecule type" value="Genomic_DNA"/>
</dbReference>
<dbReference type="SMR" id="Q9L3P8"/>
<dbReference type="STRING" id="240292.Ava_0384"/>
<dbReference type="KEGG" id="ava:Ava_0384"/>
<dbReference type="eggNOG" id="COG0739">
    <property type="taxonomic scope" value="Bacteria"/>
</dbReference>
<dbReference type="HOGENOM" id="CLU_033498_0_0_3"/>
<dbReference type="Proteomes" id="UP000002533">
    <property type="component" value="Chromosome"/>
</dbReference>
<dbReference type="GO" id="GO:0031676">
    <property type="term" value="C:plasma membrane-derived thylakoid membrane"/>
    <property type="evidence" value="ECO:0007669"/>
    <property type="project" value="UniProtKB-SubCell"/>
</dbReference>
<dbReference type="GO" id="GO:0009055">
    <property type="term" value="F:electron transfer activity"/>
    <property type="evidence" value="ECO:0007669"/>
    <property type="project" value="UniProtKB-UniRule"/>
</dbReference>
<dbReference type="GO" id="GO:0020037">
    <property type="term" value="F:heme binding"/>
    <property type="evidence" value="ECO:0007669"/>
    <property type="project" value="InterPro"/>
</dbReference>
<dbReference type="GO" id="GO:0005506">
    <property type="term" value="F:iron ion binding"/>
    <property type="evidence" value="ECO:0007669"/>
    <property type="project" value="InterPro"/>
</dbReference>
<dbReference type="GO" id="GO:0015979">
    <property type="term" value="P:photosynthesis"/>
    <property type="evidence" value="ECO:0007669"/>
    <property type="project" value="UniProtKB-UniRule"/>
</dbReference>
<dbReference type="FunFam" id="1.20.5.700:FF:000001">
    <property type="entry name" value="Cytochrome f"/>
    <property type="match status" value="1"/>
</dbReference>
<dbReference type="FunFam" id="2.60.40.830:FF:000001">
    <property type="entry name" value="Cytochrome f"/>
    <property type="match status" value="1"/>
</dbReference>
<dbReference type="Gene3D" id="2.40.50.100">
    <property type="match status" value="1"/>
</dbReference>
<dbReference type="Gene3D" id="2.60.40.830">
    <property type="entry name" value="Cytochrome f large domain"/>
    <property type="match status" value="1"/>
</dbReference>
<dbReference type="Gene3D" id="1.20.5.700">
    <property type="entry name" value="Single helix bin"/>
    <property type="match status" value="1"/>
</dbReference>
<dbReference type="HAMAP" id="MF_00610">
    <property type="entry name" value="Cytb6_f_cytF"/>
    <property type="match status" value="1"/>
</dbReference>
<dbReference type="InterPro" id="IPR024058">
    <property type="entry name" value="Cyt-f_TM"/>
</dbReference>
<dbReference type="InterPro" id="IPR002325">
    <property type="entry name" value="Cyt_f"/>
</dbReference>
<dbReference type="InterPro" id="IPR024094">
    <property type="entry name" value="Cyt_f_lg_dom"/>
</dbReference>
<dbReference type="InterPro" id="IPR036826">
    <property type="entry name" value="Cyt_f_lg_dom_sf"/>
</dbReference>
<dbReference type="InterPro" id="IPR011054">
    <property type="entry name" value="Rudment_hybrid_motif"/>
</dbReference>
<dbReference type="NCBIfam" id="NF002736">
    <property type="entry name" value="PRK02693.1"/>
    <property type="match status" value="1"/>
</dbReference>
<dbReference type="PANTHER" id="PTHR33288">
    <property type="match status" value="1"/>
</dbReference>
<dbReference type="PANTHER" id="PTHR33288:SF10">
    <property type="entry name" value="CYTOCHROME F"/>
    <property type="match status" value="1"/>
</dbReference>
<dbReference type="Pfam" id="PF01333">
    <property type="entry name" value="Apocytochr_F_C"/>
    <property type="match status" value="1"/>
</dbReference>
<dbReference type="Pfam" id="PF16639">
    <property type="entry name" value="Apocytochr_F_N"/>
    <property type="match status" value="1"/>
</dbReference>
<dbReference type="PRINTS" id="PR00610">
    <property type="entry name" value="CYTOCHROMEF"/>
</dbReference>
<dbReference type="SUPFAM" id="SSF103431">
    <property type="entry name" value="Cytochrome f subunit of the cytochrome b6f complex, transmembrane anchor"/>
    <property type="match status" value="1"/>
</dbReference>
<dbReference type="SUPFAM" id="SSF49441">
    <property type="entry name" value="Cytochrome f, large domain"/>
    <property type="match status" value="1"/>
</dbReference>
<dbReference type="SUPFAM" id="SSF51246">
    <property type="entry name" value="Rudiment single hybrid motif"/>
    <property type="match status" value="1"/>
</dbReference>
<dbReference type="PROSITE" id="PS51010">
    <property type="entry name" value="CYTF"/>
    <property type="match status" value="1"/>
</dbReference>
<reference key="1">
    <citation type="submission" date="2000-10" db="EMBL/GenBank/DDBJ databases">
        <title>b6f complex of Anabaena variabilis.</title>
        <authorList>
            <person name="Arnold M."/>
        </authorList>
    </citation>
    <scope>NUCLEOTIDE SEQUENCE [GENOMIC DNA]</scope>
    <source>
        <strain>FD</strain>
    </source>
</reference>
<reference key="2">
    <citation type="journal article" date="2014" name="Stand. Genomic Sci.">
        <title>Complete genome sequence of Anabaena variabilis ATCC 29413.</title>
        <authorList>
            <person name="Thiel T."/>
            <person name="Pratte B.S."/>
            <person name="Zhong J."/>
            <person name="Goodwin L."/>
            <person name="Copeland A."/>
            <person name="Lucas S."/>
            <person name="Han C."/>
            <person name="Pitluck S."/>
            <person name="Land M.L."/>
            <person name="Kyrpides N.C."/>
            <person name="Woyke T."/>
        </authorList>
    </citation>
    <scope>NUCLEOTIDE SEQUENCE [LARGE SCALE GENOMIC DNA]</scope>
    <source>
        <strain>ATCC 29413 / PCC 7937</strain>
    </source>
</reference>
<protein>
    <recommendedName>
        <fullName evidence="1">Cytochrome f</fullName>
    </recommendedName>
</protein>
<organism>
    <name type="scientific">Trichormus variabilis (strain ATCC 29413 / PCC 7937)</name>
    <name type="common">Anabaena variabilis</name>
    <dbReference type="NCBI Taxonomy" id="240292"/>
    <lineage>
        <taxon>Bacteria</taxon>
        <taxon>Bacillati</taxon>
        <taxon>Cyanobacteriota</taxon>
        <taxon>Cyanophyceae</taxon>
        <taxon>Nostocales</taxon>
        <taxon>Nostocaceae</taxon>
        <taxon>Trichormus</taxon>
    </lineage>
</organism>
<feature type="signal peptide" evidence="1">
    <location>
        <begin position="1"/>
        <end position="44"/>
    </location>
</feature>
<feature type="chain" id="PRO_0000023843" description="Cytochrome f">
    <location>
        <begin position="45"/>
        <end position="333"/>
    </location>
</feature>
<feature type="transmembrane region" description="Helical" evidence="1">
    <location>
        <begin position="299"/>
        <end position="318"/>
    </location>
</feature>
<feature type="binding site" description="axial binding residue" evidence="1">
    <location>
        <position position="45"/>
    </location>
    <ligand>
        <name>heme</name>
        <dbReference type="ChEBI" id="CHEBI:30413"/>
    </ligand>
    <ligandPart>
        <name>Fe</name>
        <dbReference type="ChEBI" id="CHEBI:18248"/>
    </ligandPart>
</feature>
<feature type="binding site" description="covalent" evidence="1">
    <location>
        <position position="66"/>
    </location>
    <ligand>
        <name>heme</name>
        <dbReference type="ChEBI" id="CHEBI:30413"/>
    </ligand>
</feature>
<feature type="binding site" description="covalent" evidence="1">
    <location>
        <position position="69"/>
    </location>
    <ligand>
        <name>heme</name>
        <dbReference type="ChEBI" id="CHEBI:30413"/>
    </ligand>
</feature>
<feature type="binding site" description="axial binding residue" evidence="1">
    <location>
        <position position="70"/>
    </location>
    <ligand>
        <name>heme</name>
        <dbReference type="ChEBI" id="CHEBI:30413"/>
    </ligand>
    <ligandPart>
        <name>Fe</name>
        <dbReference type="ChEBI" id="CHEBI:18248"/>
    </ligandPart>
</feature>
<name>CYF_TRIV2</name>